<accession>P0A764</accession>
<accession>P24233</accession>
<comment type="function">
    <text evidence="2">Major role in the synthesis of nucleoside triphosphates other than ATP. The ATP gamma phosphate is transferred to the NDP beta phosphate via a ping-pong mechanism, using a phosphorylated active-site intermediate.</text>
</comment>
<comment type="catalytic activity">
    <reaction evidence="2">
        <text>a 2'-deoxyribonucleoside 5'-diphosphate + ATP = a 2'-deoxyribonucleoside 5'-triphosphate + ADP</text>
        <dbReference type="Rhea" id="RHEA:44640"/>
        <dbReference type="ChEBI" id="CHEBI:30616"/>
        <dbReference type="ChEBI" id="CHEBI:61560"/>
        <dbReference type="ChEBI" id="CHEBI:73316"/>
        <dbReference type="ChEBI" id="CHEBI:456216"/>
        <dbReference type="EC" id="2.7.4.6"/>
    </reaction>
</comment>
<comment type="catalytic activity">
    <reaction evidence="2">
        <text>a ribonucleoside 5'-diphosphate + ATP = a ribonucleoside 5'-triphosphate + ADP</text>
        <dbReference type="Rhea" id="RHEA:18113"/>
        <dbReference type="ChEBI" id="CHEBI:30616"/>
        <dbReference type="ChEBI" id="CHEBI:57930"/>
        <dbReference type="ChEBI" id="CHEBI:61557"/>
        <dbReference type="ChEBI" id="CHEBI:456216"/>
        <dbReference type="EC" id="2.7.4.6"/>
    </reaction>
</comment>
<comment type="cofactor">
    <cofactor evidence="2">
        <name>Mg(2+)</name>
        <dbReference type="ChEBI" id="CHEBI:18420"/>
    </cofactor>
</comment>
<comment type="subunit">
    <text evidence="2">Homotetramer.</text>
</comment>
<comment type="subcellular location">
    <subcellularLocation>
        <location evidence="2">Cytoplasm</location>
    </subcellularLocation>
</comment>
<comment type="similarity">
    <text evidence="2 3">Belongs to the NDK family.</text>
</comment>
<keyword id="KW-0067">ATP-binding</keyword>
<keyword id="KW-0963">Cytoplasm</keyword>
<keyword id="KW-0418">Kinase</keyword>
<keyword id="KW-0460">Magnesium</keyword>
<keyword id="KW-0479">Metal-binding</keyword>
<keyword id="KW-0546">Nucleotide metabolism</keyword>
<keyword id="KW-0547">Nucleotide-binding</keyword>
<keyword id="KW-0597">Phosphoprotein</keyword>
<keyword id="KW-1185">Reference proteome</keyword>
<keyword id="KW-0808">Transferase</keyword>
<protein>
    <recommendedName>
        <fullName evidence="2">Nucleoside diphosphate kinase</fullName>
        <shortName evidence="2">NDK</shortName>
        <shortName evidence="2">NDP kinase</shortName>
        <ecNumber evidence="2">2.7.4.6</ecNumber>
    </recommendedName>
    <alternativeName>
        <fullName evidence="2">Nucleoside-2-P kinase</fullName>
    </alternativeName>
</protein>
<dbReference type="EC" id="2.7.4.6" evidence="2"/>
<dbReference type="EMBL" id="AE005174">
    <property type="protein sequence ID" value="AAG57628.1"/>
    <property type="molecule type" value="Genomic_DNA"/>
</dbReference>
<dbReference type="EMBL" id="BA000007">
    <property type="protein sequence ID" value="BAB36803.1"/>
    <property type="molecule type" value="Genomic_DNA"/>
</dbReference>
<dbReference type="PIR" id="D91051">
    <property type="entry name" value="D91051"/>
</dbReference>
<dbReference type="PIR" id="H85895">
    <property type="entry name" value="H85895"/>
</dbReference>
<dbReference type="RefSeq" id="NP_311407.1">
    <property type="nucleotide sequence ID" value="NC_002695.1"/>
</dbReference>
<dbReference type="RefSeq" id="WP_000963837.1">
    <property type="nucleotide sequence ID" value="NZ_VOAI01000001.1"/>
</dbReference>
<dbReference type="SMR" id="P0A764"/>
<dbReference type="STRING" id="155864.Z3781"/>
<dbReference type="GeneID" id="915205"/>
<dbReference type="GeneID" id="93774618"/>
<dbReference type="KEGG" id="ece:Z3781"/>
<dbReference type="KEGG" id="ecs:ECs_3380"/>
<dbReference type="PATRIC" id="fig|386585.9.peg.3531"/>
<dbReference type="eggNOG" id="COG0105">
    <property type="taxonomic scope" value="Bacteria"/>
</dbReference>
<dbReference type="HOGENOM" id="CLU_060216_8_1_6"/>
<dbReference type="OMA" id="QHYGEHK"/>
<dbReference type="Proteomes" id="UP000000558">
    <property type="component" value="Chromosome"/>
</dbReference>
<dbReference type="Proteomes" id="UP000002519">
    <property type="component" value="Chromosome"/>
</dbReference>
<dbReference type="GO" id="GO:0005737">
    <property type="term" value="C:cytoplasm"/>
    <property type="evidence" value="ECO:0007669"/>
    <property type="project" value="UniProtKB-SubCell"/>
</dbReference>
<dbReference type="GO" id="GO:0005524">
    <property type="term" value="F:ATP binding"/>
    <property type="evidence" value="ECO:0007669"/>
    <property type="project" value="UniProtKB-UniRule"/>
</dbReference>
<dbReference type="GO" id="GO:0046872">
    <property type="term" value="F:metal ion binding"/>
    <property type="evidence" value="ECO:0007669"/>
    <property type="project" value="UniProtKB-KW"/>
</dbReference>
<dbReference type="GO" id="GO:0004550">
    <property type="term" value="F:nucleoside diphosphate kinase activity"/>
    <property type="evidence" value="ECO:0007669"/>
    <property type="project" value="UniProtKB-UniRule"/>
</dbReference>
<dbReference type="GO" id="GO:0006241">
    <property type="term" value="P:CTP biosynthetic process"/>
    <property type="evidence" value="ECO:0007669"/>
    <property type="project" value="UniProtKB-UniRule"/>
</dbReference>
<dbReference type="GO" id="GO:0006183">
    <property type="term" value="P:GTP biosynthetic process"/>
    <property type="evidence" value="ECO:0007669"/>
    <property type="project" value="UniProtKB-UniRule"/>
</dbReference>
<dbReference type="GO" id="GO:0006228">
    <property type="term" value="P:UTP biosynthetic process"/>
    <property type="evidence" value="ECO:0007669"/>
    <property type="project" value="UniProtKB-UniRule"/>
</dbReference>
<dbReference type="CDD" id="cd04413">
    <property type="entry name" value="NDPk_I"/>
    <property type="match status" value="1"/>
</dbReference>
<dbReference type="FunFam" id="3.30.70.141:FF:000001">
    <property type="entry name" value="Nucleoside diphosphate kinase"/>
    <property type="match status" value="1"/>
</dbReference>
<dbReference type="Gene3D" id="3.30.70.141">
    <property type="entry name" value="Nucleoside diphosphate kinase-like domain"/>
    <property type="match status" value="1"/>
</dbReference>
<dbReference type="HAMAP" id="MF_00451">
    <property type="entry name" value="NDP_kinase"/>
    <property type="match status" value="1"/>
</dbReference>
<dbReference type="InterPro" id="IPR034907">
    <property type="entry name" value="NDK-like_dom"/>
</dbReference>
<dbReference type="InterPro" id="IPR036850">
    <property type="entry name" value="NDK-like_dom_sf"/>
</dbReference>
<dbReference type="InterPro" id="IPR001564">
    <property type="entry name" value="Nucleoside_diP_kinase"/>
</dbReference>
<dbReference type="InterPro" id="IPR023005">
    <property type="entry name" value="Nucleoside_diP_kinase_AS"/>
</dbReference>
<dbReference type="NCBIfam" id="NF001908">
    <property type="entry name" value="PRK00668.1"/>
    <property type="match status" value="1"/>
</dbReference>
<dbReference type="PANTHER" id="PTHR46161">
    <property type="entry name" value="NUCLEOSIDE DIPHOSPHATE KINASE"/>
    <property type="match status" value="1"/>
</dbReference>
<dbReference type="PANTHER" id="PTHR46161:SF3">
    <property type="entry name" value="NUCLEOSIDE DIPHOSPHATE KINASE DDB_G0292928-RELATED"/>
    <property type="match status" value="1"/>
</dbReference>
<dbReference type="Pfam" id="PF00334">
    <property type="entry name" value="NDK"/>
    <property type="match status" value="1"/>
</dbReference>
<dbReference type="PRINTS" id="PR01243">
    <property type="entry name" value="NUCDPKINASE"/>
</dbReference>
<dbReference type="SMART" id="SM00562">
    <property type="entry name" value="NDK"/>
    <property type="match status" value="1"/>
</dbReference>
<dbReference type="SUPFAM" id="SSF54919">
    <property type="entry name" value="Nucleoside diphosphate kinase, NDK"/>
    <property type="match status" value="1"/>
</dbReference>
<dbReference type="PROSITE" id="PS00469">
    <property type="entry name" value="NDPK"/>
    <property type="match status" value="1"/>
</dbReference>
<dbReference type="PROSITE" id="PS51374">
    <property type="entry name" value="NDPK_LIKE"/>
    <property type="match status" value="1"/>
</dbReference>
<sequence length="143" mass="15463">MAIERTFSIIKPNAVAKNVIGNIFARFEAAGFKIVGTKMLHLTVEQARGFYAEHDGKPFFDGLVEFMTSGPIVVSVLEGENAVQRHRDLLGATNPANALAGTLRADYADSLTENGTHGSDSVESAAREIAYFFGEGEVCPRTR</sequence>
<feature type="initiator methionine" description="Removed" evidence="1">
    <location>
        <position position="1"/>
    </location>
</feature>
<feature type="chain" id="PRO_0000136979" description="Nucleoside diphosphate kinase">
    <location>
        <begin position="2"/>
        <end position="143"/>
    </location>
</feature>
<feature type="active site" description="Pros-phosphohistidine intermediate" evidence="2">
    <location>
        <position position="117"/>
    </location>
</feature>
<feature type="binding site" evidence="2">
    <location>
        <position position="11"/>
    </location>
    <ligand>
        <name>ATP</name>
        <dbReference type="ChEBI" id="CHEBI:30616"/>
    </ligand>
</feature>
<feature type="binding site" evidence="2">
    <location>
        <position position="59"/>
    </location>
    <ligand>
        <name>ATP</name>
        <dbReference type="ChEBI" id="CHEBI:30616"/>
    </ligand>
</feature>
<feature type="binding site" evidence="2">
    <location>
        <position position="87"/>
    </location>
    <ligand>
        <name>ATP</name>
        <dbReference type="ChEBI" id="CHEBI:30616"/>
    </ligand>
</feature>
<feature type="binding site" evidence="2">
    <location>
        <position position="93"/>
    </location>
    <ligand>
        <name>ATP</name>
        <dbReference type="ChEBI" id="CHEBI:30616"/>
    </ligand>
</feature>
<feature type="binding site" evidence="2">
    <location>
        <position position="104"/>
    </location>
    <ligand>
        <name>ATP</name>
        <dbReference type="ChEBI" id="CHEBI:30616"/>
    </ligand>
</feature>
<feature type="binding site" evidence="2">
    <location>
        <position position="114"/>
    </location>
    <ligand>
        <name>ATP</name>
        <dbReference type="ChEBI" id="CHEBI:30616"/>
    </ligand>
</feature>
<name>NDK_ECO57</name>
<proteinExistence type="inferred from homology"/>
<gene>
    <name evidence="2" type="primary">ndk</name>
    <name type="ordered locus">Z3781</name>
    <name type="ordered locus">ECs3380</name>
</gene>
<reference key="1">
    <citation type="journal article" date="2001" name="Nature">
        <title>Genome sequence of enterohaemorrhagic Escherichia coli O157:H7.</title>
        <authorList>
            <person name="Perna N.T."/>
            <person name="Plunkett G. III"/>
            <person name="Burland V."/>
            <person name="Mau B."/>
            <person name="Glasner J.D."/>
            <person name="Rose D.J."/>
            <person name="Mayhew G.F."/>
            <person name="Evans P.S."/>
            <person name="Gregor J."/>
            <person name="Kirkpatrick H.A."/>
            <person name="Posfai G."/>
            <person name="Hackett J."/>
            <person name="Klink S."/>
            <person name="Boutin A."/>
            <person name="Shao Y."/>
            <person name="Miller L."/>
            <person name="Grotbeck E.J."/>
            <person name="Davis N.W."/>
            <person name="Lim A."/>
            <person name="Dimalanta E.T."/>
            <person name="Potamousis K."/>
            <person name="Apodaca J."/>
            <person name="Anantharaman T.S."/>
            <person name="Lin J."/>
            <person name="Yen G."/>
            <person name="Schwartz D.C."/>
            <person name="Welch R.A."/>
            <person name="Blattner F.R."/>
        </authorList>
    </citation>
    <scope>NUCLEOTIDE SEQUENCE [LARGE SCALE GENOMIC DNA]</scope>
    <source>
        <strain>O157:H7 / EDL933 / ATCC 700927 / EHEC</strain>
    </source>
</reference>
<reference key="2">
    <citation type="journal article" date="2001" name="DNA Res.">
        <title>Complete genome sequence of enterohemorrhagic Escherichia coli O157:H7 and genomic comparison with a laboratory strain K-12.</title>
        <authorList>
            <person name="Hayashi T."/>
            <person name="Makino K."/>
            <person name="Ohnishi M."/>
            <person name="Kurokawa K."/>
            <person name="Ishii K."/>
            <person name="Yokoyama K."/>
            <person name="Han C.-G."/>
            <person name="Ohtsubo E."/>
            <person name="Nakayama K."/>
            <person name="Murata T."/>
            <person name="Tanaka M."/>
            <person name="Tobe T."/>
            <person name="Iida T."/>
            <person name="Takami H."/>
            <person name="Honda T."/>
            <person name="Sasakawa C."/>
            <person name="Ogasawara N."/>
            <person name="Yasunaga T."/>
            <person name="Kuhara S."/>
            <person name="Shiba T."/>
            <person name="Hattori M."/>
            <person name="Shinagawa H."/>
        </authorList>
    </citation>
    <scope>NUCLEOTIDE SEQUENCE [LARGE SCALE GENOMIC DNA]</scope>
    <source>
        <strain>O157:H7 / Sakai / RIMD 0509952 / EHEC</strain>
    </source>
</reference>
<organism>
    <name type="scientific">Escherichia coli O157:H7</name>
    <dbReference type="NCBI Taxonomy" id="83334"/>
    <lineage>
        <taxon>Bacteria</taxon>
        <taxon>Pseudomonadati</taxon>
        <taxon>Pseudomonadota</taxon>
        <taxon>Gammaproteobacteria</taxon>
        <taxon>Enterobacterales</taxon>
        <taxon>Enterobacteriaceae</taxon>
        <taxon>Escherichia</taxon>
    </lineage>
</organism>
<evidence type="ECO:0000250" key="1"/>
<evidence type="ECO:0000255" key="2">
    <source>
        <dbReference type="HAMAP-Rule" id="MF_00451"/>
    </source>
</evidence>
<evidence type="ECO:0000305" key="3"/>